<sequence>MGQAATHVDANYTLINYTEEVIEDDRDACAVADDPKYPSSFGITLAVPEWEAICTAIVLTLIIISTIVGNILVILSVFTYKPLRIVQNFFIVSLAVADLTVAILVLPLNVAYSILGQWVFGIYVCKMWLTCDIMCCTSSILNLCAIALDRYWAITDPINYAQKRTLERVLLMIGVVWVLSLIISSPPLLGWNDWPDVFEPDTPCRLTSQPGFVIFSSSGSFYIPLVIMTVVYFEIYLATKKRLRDRAKATKISTISSGQNKYNNKDDHHDQDSVSSEANHNEHQGVTRLVSDNEKKKRTRKLTPKKKPKRKYWSKDDKSQNKLIIPILSNENSVTDMGENLENRNTSSESNSKETHEDDLIEVNETVPVKTHHKKPKPNQQSAVYQFIEEKQRISLTRERRAARTLGIIMGVFVVCWLPFFVIYLVIPFCASCCLSNKFINFITWLGYCNSALNPLIYTIFNMDFRRAFKKLLCMKP</sequence>
<evidence type="ECO:0000250" key="1"/>
<evidence type="ECO:0000255" key="2"/>
<evidence type="ECO:0000255" key="3">
    <source>
        <dbReference type="PROSITE-ProRule" id="PRU00521"/>
    </source>
</evidence>
<evidence type="ECO:0000256" key="4">
    <source>
        <dbReference type="SAM" id="MobiDB-lite"/>
    </source>
</evidence>
<accession>Q25188</accession>
<organism>
    <name type="scientific">Heliothis virescens</name>
    <name type="common">Tobacco budworm moth</name>
    <dbReference type="NCBI Taxonomy" id="7102"/>
    <lineage>
        <taxon>Eukaryota</taxon>
        <taxon>Metazoa</taxon>
        <taxon>Ecdysozoa</taxon>
        <taxon>Arthropoda</taxon>
        <taxon>Hexapoda</taxon>
        <taxon>Insecta</taxon>
        <taxon>Pterygota</taxon>
        <taxon>Neoptera</taxon>
        <taxon>Endopterygota</taxon>
        <taxon>Lepidoptera</taxon>
        <taxon>Glossata</taxon>
        <taxon>Ditrysia</taxon>
        <taxon>Noctuoidea</taxon>
        <taxon>Noctuidae</taxon>
        <taxon>Heliothinae</taxon>
        <taxon>Heliothis</taxon>
    </lineage>
</organism>
<proteinExistence type="evidence at transcript level"/>
<keyword id="KW-1003">Cell membrane</keyword>
<keyword id="KW-0297">G-protein coupled receptor</keyword>
<keyword id="KW-0325">Glycoprotein</keyword>
<keyword id="KW-0472">Membrane</keyword>
<keyword id="KW-0675">Receptor</keyword>
<keyword id="KW-0807">Transducer</keyword>
<keyword id="KW-0812">Transmembrane</keyword>
<keyword id="KW-1133">Transmembrane helix</keyword>
<dbReference type="EMBL" id="X95606">
    <property type="protein sequence ID" value="CAA64864.1"/>
    <property type="molecule type" value="mRNA"/>
</dbReference>
<dbReference type="SMR" id="Q25188"/>
<dbReference type="GO" id="GO:0005886">
    <property type="term" value="C:plasma membrane"/>
    <property type="evidence" value="ECO:0007669"/>
    <property type="project" value="UniProtKB-SubCell"/>
</dbReference>
<dbReference type="GO" id="GO:0004989">
    <property type="term" value="F:octopamine receptor activity"/>
    <property type="evidence" value="ECO:0007669"/>
    <property type="project" value="InterPro"/>
</dbReference>
<dbReference type="CDD" id="cd15060">
    <property type="entry name" value="7tmA_tyramine_octopamine_R-like"/>
    <property type="match status" value="1"/>
</dbReference>
<dbReference type="FunFam" id="1.20.1070.10:FF:000248">
    <property type="entry name" value="5-hydroxytryptamine receptor 1A-beta"/>
    <property type="match status" value="1"/>
</dbReference>
<dbReference type="Gene3D" id="1.20.1070.10">
    <property type="entry name" value="Rhodopsin 7-helix transmembrane proteins"/>
    <property type="match status" value="2"/>
</dbReference>
<dbReference type="InterPro" id="IPR000276">
    <property type="entry name" value="GPCR_Rhodpsn"/>
</dbReference>
<dbReference type="InterPro" id="IPR017452">
    <property type="entry name" value="GPCR_Rhodpsn_7TM"/>
</dbReference>
<dbReference type="InterPro" id="IPR002002">
    <property type="entry name" value="Octopmn_rcpt"/>
</dbReference>
<dbReference type="PANTHER" id="PTHR24248">
    <property type="entry name" value="ADRENERGIC RECEPTOR-RELATED G-PROTEIN COUPLED RECEPTOR"/>
    <property type="match status" value="1"/>
</dbReference>
<dbReference type="PANTHER" id="PTHR24248:SF174">
    <property type="entry name" value="TYRAMINE_OCTOPAMINE RECEPTOR"/>
    <property type="match status" value="1"/>
</dbReference>
<dbReference type="Pfam" id="PF00001">
    <property type="entry name" value="7tm_1"/>
    <property type="match status" value="1"/>
</dbReference>
<dbReference type="PRINTS" id="PR00237">
    <property type="entry name" value="GPCRRHODOPSN"/>
</dbReference>
<dbReference type="PRINTS" id="PR00664">
    <property type="entry name" value="OCTOPAMINER"/>
</dbReference>
<dbReference type="SMART" id="SM01381">
    <property type="entry name" value="7TM_GPCR_Srsx"/>
    <property type="match status" value="1"/>
</dbReference>
<dbReference type="SUPFAM" id="SSF81321">
    <property type="entry name" value="Family A G protein-coupled receptor-like"/>
    <property type="match status" value="1"/>
</dbReference>
<dbReference type="PROSITE" id="PS00237">
    <property type="entry name" value="G_PROTEIN_RECEP_F1_1"/>
    <property type="match status" value="1"/>
</dbReference>
<dbReference type="PROSITE" id="PS50262">
    <property type="entry name" value="G_PROTEIN_RECEP_F1_2"/>
    <property type="match status" value="1"/>
</dbReference>
<reference key="1">
    <citation type="journal article" date="1996" name="Insect Biochem. Mol. Biol.">
        <title>Cloning of biogenic amine receptors from moths (Bombyx mori and Heliothis virescens).</title>
        <authorList>
            <person name="von Nickisch-Rosenegk E."/>
            <person name="Krieger J."/>
            <person name="Kubick S."/>
            <person name="Laage R."/>
            <person name="Strobel J."/>
            <person name="Strotmann J."/>
            <person name="Breer H."/>
        </authorList>
    </citation>
    <scope>NUCLEOTIDE SEQUENCE [MRNA]</scope>
    <source>
        <tissue>Antenna</tissue>
    </source>
</reference>
<protein>
    <recommendedName>
        <fullName>Octopamine receptor</fullName>
    </recommendedName>
</protein>
<name>OAR_HELVI</name>
<comment type="function">
    <text evidence="1">Receptor for octopamine. Octopamine (OA) is a neurotransmitter, neurohormone, and neuromodulator in invertebrates. The activity of this receptor is mediated by G proteins which activate adenylyl cyclase (By similarity).</text>
</comment>
<comment type="subcellular location">
    <subcellularLocation>
        <location>Cell membrane</location>
        <topology>Multi-pass membrane protein</topology>
    </subcellularLocation>
</comment>
<comment type="similarity">
    <text evidence="3">Belongs to the G-protein coupled receptor 1 family.</text>
</comment>
<feature type="chain" id="PRO_0000069953" description="Octopamine receptor">
    <location>
        <begin position="1"/>
        <end position="477"/>
    </location>
</feature>
<feature type="topological domain" description="Extracellular" evidence="2">
    <location>
        <begin position="1"/>
        <end position="55"/>
    </location>
</feature>
<feature type="transmembrane region" description="Helical; Name=1" evidence="2">
    <location>
        <begin position="56"/>
        <end position="78"/>
    </location>
</feature>
<feature type="topological domain" description="Cytoplasmic" evidence="2">
    <location>
        <begin position="79"/>
        <end position="88"/>
    </location>
</feature>
<feature type="transmembrane region" description="Helical; Name=2" evidence="2">
    <location>
        <begin position="89"/>
        <end position="110"/>
    </location>
</feature>
<feature type="topological domain" description="Extracellular" evidence="2">
    <location>
        <begin position="111"/>
        <end position="127"/>
    </location>
</feature>
<feature type="transmembrane region" description="Helical; Name=3" evidence="2">
    <location>
        <begin position="128"/>
        <end position="148"/>
    </location>
</feature>
<feature type="topological domain" description="Cytoplasmic" evidence="2">
    <location>
        <begin position="149"/>
        <end position="168"/>
    </location>
</feature>
<feature type="transmembrane region" description="Helical; Name=4" evidence="2">
    <location>
        <begin position="169"/>
        <end position="191"/>
    </location>
</feature>
<feature type="topological domain" description="Extracellular" evidence="2">
    <location>
        <begin position="192"/>
        <end position="216"/>
    </location>
</feature>
<feature type="transmembrane region" description="Helical; Name=5" evidence="2">
    <location>
        <begin position="217"/>
        <end position="238"/>
    </location>
</feature>
<feature type="topological domain" description="Cytoplasmic" evidence="2">
    <location>
        <begin position="239"/>
        <end position="405"/>
    </location>
</feature>
<feature type="transmembrane region" description="Helical; Name=6" evidence="2">
    <location>
        <begin position="406"/>
        <end position="427"/>
    </location>
</feature>
<feature type="topological domain" description="Extracellular" evidence="2">
    <location>
        <begin position="428"/>
        <end position="439"/>
    </location>
</feature>
<feature type="transmembrane region" description="Helical; Name=7" evidence="2">
    <location>
        <begin position="440"/>
        <end position="460"/>
    </location>
</feature>
<feature type="topological domain" description="Cytoplasmic" evidence="2">
    <location>
        <begin position="461"/>
        <end position="477"/>
    </location>
</feature>
<feature type="region of interest" description="Disordered" evidence="4">
    <location>
        <begin position="256"/>
        <end position="317"/>
    </location>
</feature>
<feature type="region of interest" description="Disordered" evidence="4">
    <location>
        <begin position="334"/>
        <end position="358"/>
    </location>
</feature>
<feature type="compositionally biased region" description="Basic and acidic residues" evidence="4">
    <location>
        <begin position="263"/>
        <end position="272"/>
    </location>
</feature>
<feature type="compositionally biased region" description="Basic and acidic residues" evidence="4">
    <location>
        <begin position="279"/>
        <end position="295"/>
    </location>
</feature>
<feature type="compositionally biased region" description="Basic residues" evidence="4">
    <location>
        <begin position="296"/>
        <end position="312"/>
    </location>
</feature>
<feature type="glycosylation site" description="N-linked (GlcNAc...) asparagine" evidence="2">
    <location>
        <position position="11"/>
    </location>
</feature>
<feature type="glycosylation site" description="N-linked (GlcNAc...) asparagine" evidence="2">
    <location>
        <position position="16"/>
    </location>
</feature>